<name>ARG39_HUMAN</name>
<keyword id="KW-0025">Alternative splicing</keyword>
<keyword id="KW-1003">Cell membrane</keyword>
<keyword id="KW-0344">Guanine-nucleotide releasing factor</keyword>
<keyword id="KW-0472">Membrane</keyword>
<keyword id="KW-1267">Proteomics identification</keyword>
<keyword id="KW-1185">Reference proteome</keyword>
<reference key="1">
    <citation type="submission" date="2003-09" db="EMBL/GenBank/DDBJ databases">
        <title>Novel human oncogene homolog on chromosome 9p13, alternative splicing.</title>
        <authorList>
            <person name="Makela H.M.A."/>
            <person name="Ridanpaa M."/>
        </authorList>
    </citation>
    <scope>NUCLEOTIDE SEQUENCE [MRNA] (ISOFORM 4)</scope>
    <source>
        <tissue>Lymphoblast</tissue>
    </source>
</reference>
<reference key="2">
    <citation type="journal article" date="2004" name="Nat. Genet.">
        <title>Complete sequencing and characterization of 21,243 full-length human cDNAs.</title>
        <authorList>
            <person name="Ota T."/>
            <person name="Suzuki Y."/>
            <person name="Nishikawa T."/>
            <person name="Otsuki T."/>
            <person name="Sugiyama T."/>
            <person name="Irie R."/>
            <person name="Wakamatsu A."/>
            <person name="Hayashi K."/>
            <person name="Sato H."/>
            <person name="Nagai K."/>
            <person name="Kimura K."/>
            <person name="Makita H."/>
            <person name="Sekine M."/>
            <person name="Obayashi M."/>
            <person name="Nishi T."/>
            <person name="Shibahara T."/>
            <person name="Tanaka T."/>
            <person name="Ishii S."/>
            <person name="Yamamoto J."/>
            <person name="Saito K."/>
            <person name="Kawai Y."/>
            <person name="Isono Y."/>
            <person name="Nakamura Y."/>
            <person name="Nagahari K."/>
            <person name="Murakami K."/>
            <person name="Yasuda T."/>
            <person name="Iwayanagi T."/>
            <person name="Wagatsuma M."/>
            <person name="Shiratori A."/>
            <person name="Sudo H."/>
            <person name="Hosoiri T."/>
            <person name="Kaku Y."/>
            <person name="Kodaira H."/>
            <person name="Kondo H."/>
            <person name="Sugawara M."/>
            <person name="Takahashi M."/>
            <person name="Kanda K."/>
            <person name="Yokoi T."/>
            <person name="Furuya T."/>
            <person name="Kikkawa E."/>
            <person name="Omura Y."/>
            <person name="Abe K."/>
            <person name="Kamihara K."/>
            <person name="Katsuta N."/>
            <person name="Sato K."/>
            <person name="Tanikawa M."/>
            <person name="Yamazaki M."/>
            <person name="Ninomiya K."/>
            <person name="Ishibashi T."/>
            <person name="Yamashita H."/>
            <person name="Murakawa K."/>
            <person name="Fujimori K."/>
            <person name="Tanai H."/>
            <person name="Kimata M."/>
            <person name="Watanabe M."/>
            <person name="Hiraoka S."/>
            <person name="Chiba Y."/>
            <person name="Ishida S."/>
            <person name="Ono Y."/>
            <person name="Takiguchi S."/>
            <person name="Watanabe S."/>
            <person name="Yosida M."/>
            <person name="Hotuta T."/>
            <person name="Kusano J."/>
            <person name="Kanehori K."/>
            <person name="Takahashi-Fujii A."/>
            <person name="Hara H."/>
            <person name="Tanase T.-O."/>
            <person name="Nomura Y."/>
            <person name="Togiya S."/>
            <person name="Komai F."/>
            <person name="Hara R."/>
            <person name="Takeuchi K."/>
            <person name="Arita M."/>
            <person name="Imose N."/>
            <person name="Musashino K."/>
            <person name="Yuuki H."/>
            <person name="Oshima A."/>
            <person name="Sasaki N."/>
            <person name="Aotsuka S."/>
            <person name="Yoshikawa Y."/>
            <person name="Matsunawa H."/>
            <person name="Ichihara T."/>
            <person name="Shiohata N."/>
            <person name="Sano S."/>
            <person name="Moriya S."/>
            <person name="Momiyama H."/>
            <person name="Satoh N."/>
            <person name="Takami S."/>
            <person name="Terashima Y."/>
            <person name="Suzuki O."/>
            <person name="Nakagawa S."/>
            <person name="Senoh A."/>
            <person name="Mizoguchi H."/>
            <person name="Goto Y."/>
            <person name="Shimizu F."/>
            <person name="Wakebe H."/>
            <person name="Hishigaki H."/>
            <person name="Watanabe T."/>
            <person name="Sugiyama A."/>
            <person name="Takemoto M."/>
            <person name="Kawakami B."/>
            <person name="Yamazaki M."/>
            <person name="Watanabe K."/>
            <person name="Kumagai A."/>
            <person name="Itakura S."/>
            <person name="Fukuzumi Y."/>
            <person name="Fujimori Y."/>
            <person name="Komiyama M."/>
            <person name="Tashiro H."/>
            <person name="Tanigami A."/>
            <person name="Fujiwara T."/>
            <person name="Ono T."/>
            <person name="Yamada K."/>
            <person name="Fujii Y."/>
            <person name="Ozaki K."/>
            <person name="Hirao M."/>
            <person name="Ohmori Y."/>
            <person name="Kawabata A."/>
            <person name="Hikiji T."/>
            <person name="Kobatake N."/>
            <person name="Inagaki H."/>
            <person name="Ikema Y."/>
            <person name="Okamoto S."/>
            <person name="Okitani R."/>
            <person name="Kawakami T."/>
            <person name="Noguchi S."/>
            <person name="Itoh T."/>
            <person name="Shigeta K."/>
            <person name="Senba T."/>
            <person name="Matsumura K."/>
            <person name="Nakajima Y."/>
            <person name="Mizuno T."/>
            <person name="Morinaga M."/>
            <person name="Sasaki M."/>
            <person name="Togashi T."/>
            <person name="Oyama M."/>
            <person name="Hata H."/>
            <person name="Watanabe M."/>
            <person name="Komatsu T."/>
            <person name="Mizushima-Sugano J."/>
            <person name="Satoh T."/>
            <person name="Shirai Y."/>
            <person name="Takahashi Y."/>
            <person name="Nakagawa K."/>
            <person name="Okumura K."/>
            <person name="Nagase T."/>
            <person name="Nomura N."/>
            <person name="Kikuchi H."/>
            <person name="Masuho Y."/>
            <person name="Yamashita R."/>
            <person name="Nakai K."/>
            <person name="Yada T."/>
            <person name="Nakamura Y."/>
            <person name="Ohara O."/>
            <person name="Isogai T."/>
            <person name="Sugano S."/>
        </authorList>
    </citation>
    <scope>NUCLEOTIDE SEQUENCE [LARGE SCALE MRNA] (ISOFORM 3)</scope>
</reference>
<reference key="3">
    <citation type="journal article" date="2004" name="Nature">
        <title>DNA sequence and analysis of human chromosome 9.</title>
        <authorList>
            <person name="Humphray S.J."/>
            <person name="Oliver K."/>
            <person name="Hunt A.R."/>
            <person name="Plumb R.W."/>
            <person name="Loveland J.E."/>
            <person name="Howe K.L."/>
            <person name="Andrews T.D."/>
            <person name="Searle S."/>
            <person name="Hunt S.E."/>
            <person name="Scott C.E."/>
            <person name="Jones M.C."/>
            <person name="Ainscough R."/>
            <person name="Almeida J.P."/>
            <person name="Ambrose K.D."/>
            <person name="Ashwell R.I.S."/>
            <person name="Babbage A.K."/>
            <person name="Babbage S."/>
            <person name="Bagguley C.L."/>
            <person name="Bailey J."/>
            <person name="Banerjee R."/>
            <person name="Barker D.J."/>
            <person name="Barlow K.F."/>
            <person name="Bates K."/>
            <person name="Beasley H."/>
            <person name="Beasley O."/>
            <person name="Bird C.P."/>
            <person name="Bray-Allen S."/>
            <person name="Brown A.J."/>
            <person name="Brown J.Y."/>
            <person name="Burford D."/>
            <person name="Burrill W."/>
            <person name="Burton J."/>
            <person name="Carder C."/>
            <person name="Carter N.P."/>
            <person name="Chapman J.C."/>
            <person name="Chen Y."/>
            <person name="Clarke G."/>
            <person name="Clark S.Y."/>
            <person name="Clee C.M."/>
            <person name="Clegg S."/>
            <person name="Collier R.E."/>
            <person name="Corby N."/>
            <person name="Crosier M."/>
            <person name="Cummings A.T."/>
            <person name="Davies J."/>
            <person name="Dhami P."/>
            <person name="Dunn M."/>
            <person name="Dutta I."/>
            <person name="Dyer L.W."/>
            <person name="Earthrowl M.E."/>
            <person name="Faulkner L."/>
            <person name="Fleming C.J."/>
            <person name="Frankish A."/>
            <person name="Frankland J.A."/>
            <person name="French L."/>
            <person name="Fricker D.G."/>
            <person name="Garner P."/>
            <person name="Garnett J."/>
            <person name="Ghori J."/>
            <person name="Gilbert J.G.R."/>
            <person name="Glison C."/>
            <person name="Grafham D.V."/>
            <person name="Gribble S."/>
            <person name="Griffiths C."/>
            <person name="Griffiths-Jones S."/>
            <person name="Grocock R."/>
            <person name="Guy J."/>
            <person name="Hall R.E."/>
            <person name="Hammond S."/>
            <person name="Harley J.L."/>
            <person name="Harrison E.S.I."/>
            <person name="Hart E.A."/>
            <person name="Heath P.D."/>
            <person name="Henderson C.D."/>
            <person name="Hopkins B.L."/>
            <person name="Howard P.J."/>
            <person name="Howden P.J."/>
            <person name="Huckle E."/>
            <person name="Johnson C."/>
            <person name="Johnson D."/>
            <person name="Joy A.A."/>
            <person name="Kay M."/>
            <person name="Keenan S."/>
            <person name="Kershaw J.K."/>
            <person name="Kimberley A.M."/>
            <person name="King A."/>
            <person name="Knights A."/>
            <person name="Laird G.K."/>
            <person name="Langford C."/>
            <person name="Lawlor S."/>
            <person name="Leongamornlert D.A."/>
            <person name="Leversha M."/>
            <person name="Lloyd C."/>
            <person name="Lloyd D.M."/>
            <person name="Lovell J."/>
            <person name="Martin S."/>
            <person name="Mashreghi-Mohammadi M."/>
            <person name="Matthews L."/>
            <person name="McLaren S."/>
            <person name="McLay K.E."/>
            <person name="McMurray A."/>
            <person name="Milne S."/>
            <person name="Nickerson T."/>
            <person name="Nisbett J."/>
            <person name="Nordsiek G."/>
            <person name="Pearce A.V."/>
            <person name="Peck A.I."/>
            <person name="Porter K.M."/>
            <person name="Pandian R."/>
            <person name="Pelan S."/>
            <person name="Phillimore B."/>
            <person name="Povey S."/>
            <person name="Ramsey Y."/>
            <person name="Rand V."/>
            <person name="Scharfe M."/>
            <person name="Sehra H.K."/>
            <person name="Shownkeen R."/>
            <person name="Sims S.K."/>
            <person name="Skuce C.D."/>
            <person name="Smith M."/>
            <person name="Steward C.A."/>
            <person name="Swarbreck D."/>
            <person name="Sycamore N."/>
            <person name="Tester J."/>
            <person name="Thorpe A."/>
            <person name="Tracey A."/>
            <person name="Tromans A."/>
            <person name="Thomas D.W."/>
            <person name="Wall M."/>
            <person name="Wallis J.M."/>
            <person name="West A.P."/>
            <person name="Whitehead S.L."/>
            <person name="Willey D.L."/>
            <person name="Williams S.A."/>
            <person name="Wilming L."/>
            <person name="Wray P.W."/>
            <person name="Young L."/>
            <person name="Ashurst J.L."/>
            <person name="Coulson A."/>
            <person name="Blocker H."/>
            <person name="Durbin R.M."/>
            <person name="Sulston J.E."/>
            <person name="Hubbard T."/>
            <person name="Jackson M.J."/>
            <person name="Bentley D.R."/>
            <person name="Beck S."/>
            <person name="Rogers J."/>
            <person name="Dunham I."/>
        </authorList>
    </citation>
    <scope>NUCLEOTIDE SEQUENCE [LARGE SCALE GENOMIC DNA]</scope>
</reference>
<reference key="4">
    <citation type="journal article" date="2004" name="Genome Res.">
        <title>The status, quality, and expansion of the NIH full-length cDNA project: the Mammalian Gene Collection (MGC).</title>
        <authorList>
            <consortium name="The MGC Project Team"/>
        </authorList>
    </citation>
    <scope>NUCLEOTIDE SEQUENCE [LARGE SCALE MRNA] (ISOFORMS 1 AND 2)</scope>
    <source>
        <tissue>Placenta</tissue>
        <tissue>Testis</tissue>
    </source>
</reference>
<reference key="5">
    <citation type="journal article" date="2012" name="Mol. Med. Report.">
        <title>C9orf100, a new member of the Dbl-family guanine nucleotide exchange factors, promotes cell proliferation and migration in hepatocellular carcinoma.</title>
        <authorList>
            <person name="Wang H."/>
            <person name="Li Y."/>
            <person name="Wang Y."/>
            <person name="Han Z.G."/>
            <person name="Cai B."/>
        </authorList>
    </citation>
    <scope>FUNCTION</scope>
    <scope>SUBCELLULAR LOCATION</scope>
    <scope>TISSUE SPECIFICITY</scope>
</reference>
<organism>
    <name type="scientific">Homo sapiens</name>
    <name type="common">Human</name>
    <dbReference type="NCBI Taxonomy" id="9606"/>
    <lineage>
        <taxon>Eukaryota</taxon>
        <taxon>Metazoa</taxon>
        <taxon>Chordata</taxon>
        <taxon>Craniata</taxon>
        <taxon>Vertebrata</taxon>
        <taxon>Euteleostomi</taxon>
        <taxon>Mammalia</taxon>
        <taxon>Eutheria</taxon>
        <taxon>Euarchontoglires</taxon>
        <taxon>Primates</taxon>
        <taxon>Haplorrhini</taxon>
        <taxon>Catarrhini</taxon>
        <taxon>Hominidae</taxon>
        <taxon>Homo</taxon>
    </lineage>
</organism>
<protein>
    <recommendedName>
        <fullName>Rho guanine nucleotide exchange factor 39</fullName>
    </recommendedName>
</protein>
<evidence type="ECO:0000255" key="1">
    <source>
        <dbReference type="PROSITE-ProRule" id="PRU00062"/>
    </source>
</evidence>
<evidence type="ECO:0000255" key="2">
    <source>
        <dbReference type="PROSITE-ProRule" id="PRU00145"/>
    </source>
</evidence>
<evidence type="ECO:0000269" key="3">
    <source>
    </source>
</evidence>
<evidence type="ECO:0000303" key="4">
    <source>
    </source>
</evidence>
<evidence type="ECO:0000303" key="5">
    <source>
    </source>
</evidence>
<evidence type="ECO:0000303" key="6">
    <source ref="1"/>
</evidence>
<evidence type="ECO:0000305" key="7"/>
<comment type="function">
    <text evidence="3">Promotes cell proliferation.</text>
</comment>
<comment type="interaction">
    <interactant intactId="EBI-745468">
        <id>Q8N4T4</id>
    </interactant>
    <interactant intactId="EBI-739580">
        <id>Q13137</id>
        <label>CALCOCO2</label>
    </interactant>
    <organismsDiffer>false</organismsDiffer>
    <experiments>5</experiments>
</comment>
<comment type="interaction">
    <interactant intactId="EBI-745468">
        <id>Q8N4T4</id>
    </interactant>
    <interactant intactId="EBI-740711">
        <id>Q96CG3</id>
        <label>TIFA</label>
    </interactant>
    <organismsDiffer>false</organismsDiffer>
    <experiments>4</experiments>
</comment>
<comment type="interaction">
    <interactant intactId="EBI-745468">
        <id>Q8N4T4</id>
    </interactant>
    <interactant intactId="EBI-2510623">
        <id>Q2T9J0</id>
        <label>TYSND1</label>
    </interactant>
    <organismsDiffer>false</organismsDiffer>
    <experiments>2</experiments>
</comment>
<comment type="subcellular location">
    <subcellularLocation>
        <location evidence="3">Cell membrane</location>
    </subcellularLocation>
</comment>
<comment type="alternative products">
    <event type="alternative splicing"/>
    <isoform>
        <id>Q8N4T4-1</id>
        <name>1</name>
        <sequence type="displayed"/>
    </isoform>
    <isoform>
        <id>Q8N4T4-2</id>
        <name>2</name>
        <sequence type="described" ref="VSP_026281 VSP_026282"/>
    </isoform>
    <isoform>
        <id>Q8N4T4-3</id>
        <name>3</name>
        <sequence type="described" ref="VSP_026283 VSP_026284"/>
    </isoform>
    <isoform>
        <id>Q8N4T4-4</id>
        <name>4</name>
        <sequence type="described" ref="VSP_026285 VSP_026286"/>
    </isoform>
</comment>
<comment type="tissue specificity">
    <text evidence="3">Strongly expressed in hepatocellular carcinoma (HCC) compared with their non-cancerous counterparts.</text>
</comment>
<comment type="sequence caution" evidence="7">
    <conflict type="erroneous initiation">
        <sequence resource="EMBL-CDS" id="AAR01010"/>
    </conflict>
    <text>Extended N-terminus.</text>
</comment>
<comment type="sequence caution" evidence="7">
    <conflict type="erroneous initiation">
        <sequence resource="EMBL-CDS" id="AAR01011"/>
    </conflict>
    <text>Extended N-terminus.</text>
</comment>
<feature type="chain" id="PRO_0000291864" description="Rho guanine nucleotide exchange factor 39">
    <location>
        <begin position="1"/>
        <end position="335"/>
    </location>
</feature>
<feature type="domain" description="DH" evidence="1">
    <location>
        <begin position="22"/>
        <end position="197"/>
    </location>
</feature>
<feature type="domain" description="PH" evidence="2">
    <location>
        <begin position="227"/>
        <end position="331"/>
    </location>
</feature>
<feature type="splice variant" id="VSP_026281" description="In isoform 2." evidence="5">
    <location>
        <begin position="1"/>
        <end position="36"/>
    </location>
</feature>
<feature type="splice variant" id="VSP_026282" description="In isoform 2." evidence="5">
    <original>YQEQLGLVAT</original>
    <variation>MLGVCQTLKQ</variation>
    <location>
        <begin position="37"/>
        <end position="46"/>
    </location>
</feature>
<feature type="splice variant" id="VSP_026283" description="In isoform 3." evidence="4">
    <original>RAARL</original>
    <variation>PVLPS</variation>
    <location>
        <begin position="182"/>
        <end position="186"/>
    </location>
</feature>
<feature type="splice variant" id="VSP_026284" description="In isoform 3." evidence="4">
    <location>
        <begin position="187"/>
        <end position="335"/>
    </location>
</feature>
<feature type="splice variant" id="VSP_026285" description="In isoform 4." evidence="6">
    <original>SLSFP</original>
    <variation>TVLPS</variation>
    <location>
        <begin position="301"/>
        <end position="305"/>
    </location>
</feature>
<feature type="splice variant" id="VSP_026286" description="In isoform 4." evidence="6">
    <location>
        <begin position="306"/>
        <end position="335"/>
    </location>
</feature>
<feature type="sequence variant" id="VAR_061801" description="In dbSNP:rs45567235.">
    <original>C</original>
    <variation>F</variation>
    <location>
        <position position="5"/>
    </location>
</feature>
<feature type="sequence variant" id="VAR_032876" description="In dbSNP:rs2297879.">
    <original>H</original>
    <variation>R</variation>
    <location>
        <position position="306"/>
    </location>
</feature>
<feature type="sequence conflict" description="In Ref. 2; BAB55192." evidence="7" ref="2">
    <original>E</original>
    <variation>G</variation>
    <location>
        <position position="139"/>
    </location>
</feature>
<sequence length="335" mass="38295">MELSCPGSRCPVQEQRARWERKRACTARELLETERRYQEQLGLVATYFLGILKAKGTLRPPERQALFGSWELIYGASQELLPYLEGGCWGQGLEGFCRHLELYNQFAANSERSQTTLQEQLKKNKGFRRFVRLQEGRPEFGGLQLQDLLPLPLQRLQQYENLVVALAENTGPNSPDHQQLTRAARLISETAQRVHTIGQKQKNDQHLRRVQALLSGRQAKGLTSGRWFLRQGWLLVVPPHGEPRPRMFFLFTDVLLMAKPRPPLHLLRSGTFACKALYPMAQCHLSRVFGHSGGPCGGLLSLSFPHEKLLLMSTDQEELSRWYHSLTWAISSQKN</sequence>
<gene>
    <name type="primary">ARHGEF39</name>
    <name type="synonym">C9orf100</name>
</gene>
<accession>Q8N4T4</accession>
<accession>Q49AG0</accession>
<accession>Q6TPQ2</accession>
<accession>Q96ST6</accession>
<proteinExistence type="evidence at protein level"/>
<dbReference type="EMBL" id="AY390225">
    <property type="protein sequence ID" value="AAR01010.1"/>
    <property type="status" value="ALT_INIT"/>
    <property type="molecule type" value="mRNA"/>
</dbReference>
<dbReference type="EMBL" id="AY390226">
    <property type="protein sequence ID" value="AAR01011.1"/>
    <property type="status" value="ALT_INIT"/>
    <property type="molecule type" value="mRNA"/>
</dbReference>
<dbReference type="EMBL" id="AL357874">
    <property type="status" value="NOT_ANNOTATED_CDS"/>
    <property type="molecule type" value="Genomic_DNA"/>
</dbReference>
<dbReference type="EMBL" id="BC033666">
    <property type="protein sequence ID" value="AAH33666.1"/>
    <property type="molecule type" value="mRNA"/>
</dbReference>
<dbReference type="EMBL" id="BC038673">
    <property type="status" value="NOT_ANNOTATED_CDS"/>
    <property type="molecule type" value="mRNA"/>
</dbReference>
<dbReference type="EMBL" id="AK027548">
    <property type="protein sequence ID" value="BAB55192.1"/>
    <property type="molecule type" value="mRNA"/>
</dbReference>
<dbReference type="CCDS" id="CCDS6584.2">
    <molecule id="Q8N4T4-1"/>
</dbReference>
<dbReference type="RefSeq" id="NP_116207.2">
    <molecule id="Q8N4T4-1"/>
    <property type="nucleotide sequence ID" value="NM_032818.3"/>
</dbReference>
<dbReference type="SMR" id="Q8N4T4"/>
<dbReference type="BioGRID" id="124343">
    <property type="interactions" value="56"/>
</dbReference>
<dbReference type="FunCoup" id="Q8N4T4">
    <property type="interactions" value="870"/>
</dbReference>
<dbReference type="IntAct" id="Q8N4T4">
    <property type="interactions" value="38"/>
</dbReference>
<dbReference type="STRING" id="9606.ENSP00000367638"/>
<dbReference type="iPTMnet" id="Q8N4T4"/>
<dbReference type="PhosphoSitePlus" id="Q8N4T4"/>
<dbReference type="BioMuta" id="ARHGEF39"/>
<dbReference type="DMDM" id="74759886"/>
<dbReference type="jPOST" id="Q8N4T4"/>
<dbReference type="MassIVE" id="Q8N4T4"/>
<dbReference type="PaxDb" id="9606-ENSP00000367638"/>
<dbReference type="PeptideAtlas" id="Q8N4T4"/>
<dbReference type="ProteomicsDB" id="71971">
    <molecule id="Q8N4T4-1"/>
</dbReference>
<dbReference type="ProteomicsDB" id="71972">
    <molecule id="Q8N4T4-2"/>
</dbReference>
<dbReference type="ProteomicsDB" id="71973">
    <molecule id="Q8N4T4-3"/>
</dbReference>
<dbReference type="ProteomicsDB" id="71974">
    <molecule id="Q8N4T4-4"/>
</dbReference>
<dbReference type="Pumba" id="Q8N4T4"/>
<dbReference type="Antibodypedia" id="25913">
    <property type="antibodies" value="82 antibodies from 17 providers"/>
</dbReference>
<dbReference type="DNASU" id="84904"/>
<dbReference type="Ensembl" id="ENST00000378387.4">
    <molecule id="Q8N4T4-1"/>
    <property type="protein sequence ID" value="ENSP00000367638.3"/>
    <property type="gene ID" value="ENSG00000137135.18"/>
</dbReference>
<dbReference type="Ensembl" id="ENST00000475323.5">
    <molecule id="Q8N4T4-3"/>
    <property type="protein sequence ID" value="ENSP00000436519.1"/>
    <property type="gene ID" value="ENSG00000137135.18"/>
</dbReference>
<dbReference type="Ensembl" id="ENST00000490638.5">
    <molecule id="Q8N4T4-2"/>
    <property type="protein sequence ID" value="ENSP00000436756.1"/>
    <property type="gene ID" value="ENSG00000137135.18"/>
</dbReference>
<dbReference type="GeneID" id="84904"/>
<dbReference type="KEGG" id="hsa:84904"/>
<dbReference type="MANE-Select" id="ENST00000378387.4">
    <property type="protein sequence ID" value="ENSP00000367638.3"/>
    <property type="RefSeq nucleotide sequence ID" value="NM_032818.3"/>
    <property type="RefSeq protein sequence ID" value="NP_116207.2"/>
</dbReference>
<dbReference type="UCSC" id="uc003zxl.4">
    <molecule id="Q8N4T4-1"/>
    <property type="organism name" value="human"/>
</dbReference>
<dbReference type="AGR" id="HGNC:25909"/>
<dbReference type="CTD" id="84904"/>
<dbReference type="DisGeNET" id="84904"/>
<dbReference type="GeneCards" id="ARHGEF39"/>
<dbReference type="HGNC" id="HGNC:25909">
    <property type="gene designation" value="ARHGEF39"/>
</dbReference>
<dbReference type="HPA" id="ENSG00000137135">
    <property type="expression patterns" value="Low tissue specificity"/>
</dbReference>
<dbReference type="neXtProt" id="NX_Q8N4T4"/>
<dbReference type="OpenTargets" id="ENSG00000137135"/>
<dbReference type="PharmGKB" id="PA134939297"/>
<dbReference type="VEuPathDB" id="HostDB:ENSG00000137135"/>
<dbReference type="eggNOG" id="ENOG502QTR5">
    <property type="taxonomic scope" value="Eukaryota"/>
</dbReference>
<dbReference type="GeneTree" id="ENSGT00440000033863"/>
<dbReference type="HOGENOM" id="CLU_1453899_0_0_1"/>
<dbReference type="InParanoid" id="Q8N4T4"/>
<dbReference type="OMA" id="LLMCTDQ"/>
<dbReference type="OrthoDB" id="660555at2759"/>
<dbReference type="PAN-GO" id="Q8N4T4">
    <property type="GO annotations" value="2 GO annotations based on evolutionary models"/>
</dbReference>
<dbReference type="PhylomeDB" id="Q8N4T4"/>
<dbReference type="TreeFam" id="TF350447"/>
<dbReference type="PathwayCommons" id="Q8N4T4"/>
<dbReference type="Reactome" id="R-HSA-193648">
    <property type="pathway name" value="NRAGE signals death through JNK"/>
</dbReference>
<dbReference type="Reactome" id="R-HSA-416482">
    <property type="pathway name" value="G alpha (12/13) signalling events"/>
</dbReference>
<dbReference type="Reactome" id="R-HSA-9013149">
    <property type="pathway name" value="RAC1 GTPase cycle"/>
</dbReference>
<dbReference type="SignaLink" id="Q8N4T4"/>
<dbReference type="BioGRID-ORCS" id="84904">
    <property type="hits" value="11 hits in 1157 CRISPR screens"/>
</dbReference>
<dbReference type="ChiTaRS" id="ARHGEF39">
    <property type="organism name" value="human"/>
</dbReference>
<dbReference type="GenomeRNAi" id="84904"/>
<dbReference type="Pharos" id="Q8N4T4">
    <property type="development level" value="Tbio"/>
</dbReference>
<dbReference type="PRO" id="PR:Q8N4T4"/>
<dbReference type="Proteomes" id="UP000005640">
    <property type="component" value="Chromosome 9"/>
</dbReference>
<dbReference type="RNAct" id="Q8N4T4">
    <property type="molecule type" value="protein"/>
</dbReference>
<dbReference type="Bgee" id="ENSG00000137135">
    <property type="expression patterns" value="Expressed in primordial germ cell in gonad and 96 other cell types or tissues"/>
</dbReference>
<dbReference type="GO" id="GO:0005886">
    <property type="term" value="C:plasma membrane"/>
    <property type="evidence" value="ECO:0000314"/>
    <property type="project" value="UniProtKB"/>
</dbReference>
<dbReference type="GO" id="GO:0005085">
    <property type="term" value="F:guanyl-nucleotide exchange factor activity"/>
    <property type="evidence" value="ECO:0007669"/>
    <property type="project" value="UniProtKB-KW"/>
</dbReference>
<dbReference type="GO" id="GO:0030335">
    <property type="term" value="P:positive regulation of cell migration"/>
    <property type="evidence" value="ECO:0000314"/>
    <property type="project" value="UniProtKB"/>
</dbReference>
<dbReference type="FunFam" id="2.30.29.30:FF:000339">
    <property type="entry name" value="Rho guanine nucleotide exchange factor 39"/>
    <property type="match status" value="1"/>
</dbReference>
<dbReference type="FunFam" id="1.20.900.10:FF:000030">
    <property type="entry name" value="rho guanine nucleotide exchange factor 39"/>
    <property type="match status" value="1"/>
</dbReference>
<dbReference type="Gene3D" id="1.20.900.10">
    <property type="entry name" value="Dbl homology (DH) domain"/>
    <property type="match status" value="1"/>
</dbReference>
<dbReference type="Gene3D" id="2.30.29.30">
    <property type="entry name" value="Pleckstrin-homology domain (PH domain)/Phosphotyrosine-binding domain (PTB)"/>
    <property type="match status" value="1"/>
</dbReference>
<dbReference type="InterPro" id="IPR042987">
    <property type="entry name" value="ARHGEF39"/>
</dbReference>
<dbReference type="InterPro" id="IPR035899">
    <property type="entry name" value="DBL_dom_sf"/>
</dbReference>
<dbReference type="InterPro" id="IPR000219">
    <property type="entry name" value="DH_dom"/>
</dbReference>
<dbReference type="InterPro" id="IPR011993">
    <property type="entry name" value="PH-like_dom_sf"/>
</dbReference>
<dbReference type="InterPro" id="IPR001849">
    <property type="entry name" value="PH_domain"/>
</dbReference>
<dbReference type="PANTHER" id="PTHR47056">
    <property type="entry name" value="RHO GUANINE NUCLEOTIDE EXCHANGE FACTOR 39"/>
    <property type="match status" value="1"/>
</dbReference>
<dbReference type="PANTHER" id="PTHR47056:SF1">
    <property type="entry name" value="RHO GUANINE NUCLEOTIDE EXCHANGE FACTOR 39"/>
    <property type="match status" value="1"/>
</dbReference>
<dbReference type="Pfam" id="PF00169">
    <property type="entry name" value="PH"/>
    <property type="match status" value="1"/>
</dbReference>
<dbReference type="Pfam" id="PF00621">
    <property type="entry name" value="RhoGEF"/>
    <property type="match status" value="1"/>
</dbReference>
<dbReference type="SMART" id="SM00233">
    <property type="entry name" value="PH"/>
    <property type="match status" value="1"/>
</dbReference>
<dbReference type="SMART" id="SM00325">
    <property type="entry name" value="RhoGEF"/>
    <property type="match status" value="1"/>
</dbReference>
<dbReference type="SUPFAM" id="SSF48065">
    <property type="entry name" value="DBL homology domain (DH-domain)"/>
    <property type="match status" value="1"/>
</dbReference>
<dbReference type="SUPFAM" id="SSF50729">
    <property type="entry name" value="PH domain-like"/>
    <property type="match status" value="1"/>
</dbReference>
<dbReference type="PROSITE" id="PS50010">
    <property type="entry name" value="DH_2"/>
    <property type="match status" value="1"/>
</dbReference>
<dbReference type="PROSITE" id="PS50003">
    <property type="entry name" value="PH_DOMAIN"/>
    <property type="match status" value="1"/>
</dbReference>